<dbReference type="EC" id="6.3.2.8" evidence="1"/>
<dbReference type="EMBL" id="AE009951">
    <property type="protein sequence ID" value="AAL95649.1"/>
    <property type="molecule type" value="Genomic_DNA"/>
</dbReference>
<dbReference type="RefSeq" id="NP_604350.1">
    <property type="nucleotide sequence ID" value="NC_003454.1"/>
</dbReference>
<dbReference type="SMR" id="Q8RDQ2"/>
<dbReference type="FunCoup" id="Q8RDQ2">
    <property type="interactions" value="245"/>
</dbReference>
<dbReference type="STRING" id="190304.FN1456"/>
<dbReference type="PaxDb" id="190304-FN1456"/>
<dbReference type="EnsemblBacteria" id="AAL95649">
    <property type="protein sequence ID" value="AAL95649"/>
    <property type="gene ID" value="FN1456"/>
</dbReference>
<dbReference type="KEGG" id="fnu:FN1456"/>
<dbReference type="PATRIC" id="fig|190304.8.peg.2016"/>
<dbReference type="eggNOG" id="COG0773">
    <property type="taxonomic scope" value="Bacteria"/>
</dbReference>
<dbReference type="HOGENOM" id="CLU_028104_2_2_0"/>
<dbReference type="InParanoid" id="Q8RDQ2"/>
<dbReference type="BioCyc" id="FNUC190304:G1FZS-2025-MONOMER"/>
<dbReference type="UniPathway" id="UPA00219"/>
<dbReference type="Proteomes" id="UP000002521">
    <property type="component" value="Chromosome"/>
</dbReference>
<dbReference type="GO" id="GO:0005737">
    <property type="term" value="C:cytoplasm"/>
    <property type="evidence" value="ECO:0007669"/>
    <property type="project" value="UniProtKB-SubCell"/>
</dbReference>
<dbReference type="GO" id="GO:0005524">
    <property type="term" value="F:ATP binding"/>
    <property type="evidence" value="ECO:0007669"/>
    <property type="project" value="UniProtKB-UniRule"/>
</dbReference>
<dbReference type="GO" id="GO:0008763">
    <property type="term" value="F:UDP-N-acetylmuramate-L-alanine ligase activity"/>
    <property type="evidence" value="ECO:0007669"/>
    <property type="project" value="UniProtKB-UniRule"/>
</dbReference>
<dbReference type="GO" id="GO:0051301">
    <property type="term" value="P:cell division"/>
    <property type="evidence" value="ECO:0007669"/>
    <property type="project" value="UniProtKB-KW"/>
</dbReference>
<dbReference type="GO" id="GO:0071555">
    <property type="term" value="P:cell wall organization"/>
    <property type="evidence" value="ECO:0007669"/>
    <property type="project" value="UniProtKB-KW"/>
</dbReference>
<dbReference type="GO" id="GO:0009252">
    <property type="term" value="P:peptidoglycan biosynthetic process"/>
    <property type="evidence" value="ECO:0007669"/>
    <property type="project" value="UniProtKB-UniRule"/>
</dbReference>
<dbReference type="GO" id="GO:0008360">
    <property type="term" value="P:regulation of cell shape"/>
    <property type="evidence" value="ECO:0007669"/>
    <property type="project" value="UniProtKB-KW"/>
</dbReference>
<dbReference type="Gene3D" id="3.90.190.20">
    <property type="entry name" value="Mur ligase, C-terminal domain"/>
    <property type="match status" value="1"/>
</dbReference>
<dbReference type="Gene3D" id="3.40.1190.10">
    <property type="entry name" value="Mur-like, catalytic domain"/>
    <property type="match status" value="1"/>
</dbReference>
<dbReference type="Gene3D" id="3.40.50.720">
    <property type="entry name" value="NAD(P)-binding Rossmann-like Domain"/>
    <property type="match status" value="1"/>
</dbReference>
<dbReference type="HAMAP" id="MF_00046">
    <property type="entry name" value="MurC"/>
    <property type="match status" value="1"/>
</dbReference>
<dbReference type="InterPro" id="IPR036565">
    <property type="entry name" value="Mur-like_cat_sf"/>
</dbReference>
<dbReference type="InterPro" id="IPR004101">
    <property type="entry name" value="Mur_ligase_C"/>
</dbReference>
<dbReference type="InterPro" id="IPR036615">
    <property type="entry name" value="Mur_ligase_C_dom_sf"/>
</dbReference>
<dbReference type="InterPro" id="IPR013221">
    <property type="entry name" value="Mur_ligase_cen"/>
</dbReference>
<dbReference type="InterPro" id="IPR000713">
    <property type="entry name" value="Mur_ligase_N"/>
</dbReference>
<dbReference type="InterPro" id="IPR050061">
    <property type="entry name" value="MurCDEF_pg_biosynth"/>
</dbReference>
<dbReference type="InterPro" id="IPR005758">
    <property type="entry name" value="UDP-N-AcMur_Ala_ligase_MurC"/>
</dbReference>
<dbReference type="NCBIfam" id="TIGR01082">
    <property type="entry name" value="murC"/>
    <property type="match status" value="1"/>
</dbReference>
<dbReference type="PANTHER" id="PTHR43445:SF3">
    <property type="entry name" value="UDP-N-ACETYLMURAMATE--L-ALANINE LIGASE"/>
    <property type="match status" value="1"/>
</dbReference>
<dbReference type="PANTHER" id="PTHR43445">
    <property type="entry name" value="UDP-N-ACETYLMURAMATE--L-ALANINE LIGASE-RELATED"/>
    <property type="match status" value="1"/>
</dbReference>
<dbReference type="Pfam" id="PF01225">
    <property type="entry name" value="Mur_ligase"/>
    <property type="match status" value="1"/>
</dbReference>
<dbReference type="Pfam" id="PF02875">
    <property type="entry name" value="Mur_ligase_C"/>
    <property type="match status" value="1"/>
</dbReference>
<dbReference type="Pfam" id="PF08245">
    <property type="entry name" value="Mur_ligase_M"/>
    <property type="match status" value="1"/>
</dbReference>
<dbReference type="SUPFAM" id="SSF51984">
    <property type="entry name" value="MurCD N-terminal domain"/>
    <property type="match status" value="1"/>
</dbReference>
<dbReference type="SUPFAM" id="SSF53623">
    <property type="entry name" value="MurD-like peptide ligases, catalytic domain"/>
    <property type="match status" value="1"/>
</dbReference>
<dbReference type="SUPFAM" id="SSF53244">
    <property type="entry name" value="MurD-like peptide ligases, peptide-binding domain"/>
    <property type="match status" value="1"/>
</dbReference>
<protein>
    <recommendedName>
        <fullName evidence="1">UDP-N-acetylmuramate--L-alanine ligase</fullName>
        <ecNumber evidence="1">6.3.2.8</ecNumber>
    </recommendedName>
    <alternativeName>
        <fullName evidence="1">UDP-N-acetylmuramoyl-L-alanine synthetase</fullName>
    </alternativeName>
</protein>
<sequence length="468" mass="52690">MIFGGIKSMEKIYFIGINGIGMSGLAKIMKCKGYDVKGADICTNYVTEELLSMGIVVYNEHDEENVKGADYVIASTAIKESNPELSYAKNNGIEILKRGELLAKLLNRETGIAVAGTHGKTTTSSMLSAVMLSKDPTIVVGGILPEIKSNAKPGKSEYFIAEADESDNSFLFMNPKYAVITNIDADHLDVHGNLDNIKKSFIKFICHTQKEAIICLDCENLKEVVTRLPEEKTVTTYSIKDESANIFAKNIKIEDRKTIFELYINKELIGEFSLNIPGEHNIQNSLPVIYLAFKFGVSKEEIQEALNKFKGSKRRYDVLFDKELENGYGNKTKRVRIVDDYAHHPTEIKATLKAIKSIDTSRLVAIFQPHRYSRVHFLLDEFKDAFVNVDKVILLPIYAAGEKNEFNISSEELKEHINHNNVEVMNEWKDIKRYVSRVKKDSTYIFMGAGDISTLAHEIAEELEGMSE</sequence>
<accession>Q8RDQ2</accession>
<feature type="chain" id="PRO_0000182095" description="UDP-N-acetylmuramate--L-alanine ligase">
    <location>
        <begin position="1"/>
        <end position="468"/>
    </location>
</feature>
<feature type="binding site" evidence="1">
    <location>
        <begin position="116"/>
        <end position="122"/>
    </location>
    <ligand>
        <name>ATP</name>
        <dbReference type="ChEBI" id="CHEBI:30616"/>
    </ligand>
</feature>
<organism>
    <name type="scientific">Fusobacterium nucleatum subsp. nucleatum (strain ATCC 25586 / DSM 15643 / BCRC 10681 / CIP 101130 / JCM 8532 / KCTC 2640 / LMG 13131 / VPI 4355)</name>
    <dbReference type="NCBI Taxonomy" id="190304"/>
    <lineage>
        <taxon>Bacteria</taxon>
        <taxon>Fusobacteriati</taxon>
        <taxon>Fusobacteriota</taxon>
        <taxon>Fusobacteriia</taxon>
        <taxon>Fusobacteriales</taxon>
        <taxon>Fusobacteriaceae</taxon>
        <taxon>Fusobacterium</taxon>
    </lineage>
</organism>
<reference key="1">
    <citation type="journal article" date="2002" name="J. Bacteriol.">
        <title>Genome sequence and analysis of the oral bacterium Fusobacterium nucleatum strain ATCC 25586.</title>
        <authorList>
            <person name="Kapatral V."/>
            <person name="Anderson I."/>
            <person name="Ivanova N."/>
            <person name="Reznik G."/>
            <person name="Los T."/>
            <person name="Lykidis A."/>
            <person name="Bhattacharyya A."/>
            <person name="Bartman A."/>
            <person name="Gardner W."/>
            <person name="Grechkin G."/>
            <person name="Zhu L."/>
            <person name="Vasieva O."/>
            <person name="Chu L."/>
            <person name="Kogan Y."/>
            <person name="Chaga O."/>
            <person name="Goltsman E."/>
            <person name="Bernal A."/>
            <person name="Larsen N."/>
            <person name="D'Souza M."/>
            <person name="Walunas T."/>
            <person name="Pusch G."/>
            <person name="Haselkorn R."/>
            <person name="Fonstein M."/>
            <person name="Kyrpides N.C."/>
            <person name="Overbeek R."/>
        </authorList>
    </citation>
    <scope>NUCLEOTIDE SEQUENCE [LARGE SCALE GENOMIC DNA]</scope>
    <source>
        <strain>ATCC 25586 / DSM 15643 / BCRC 10681 / CIP 101130 / JCM 8532 / KCTC 2640 / LMG 13131 / VPI 4355</strain>
    </source>
</reference>
<name>MURC_FUSNN</name>
<proteinExistence type="inferred from homology"/>
<keyword id="KW-0067">ATP-binding</keyword>
<keyword id="KW-0131">Cell cycle</keyword>
<keyword id="KW-0132">Cell division</keyword>
<keyword id="KW-0133">Cell shape</keyword>
<keyword id="KW-0961">Cell wall biogenesis/degradation</keyword>
<keyword id="KW-0963">Cytoplasm</keyword>
<keyword id="KW-0436">Ligase</keyword>
<keyword id="KW-0547">Nucleotide-binding</keyword>
<keyword id="KW-0573">Peptidoglycan synthesis</keyword>
<keyword id="KW-1185">Reference proteome</keyword>
<comment type="function">
    <text evidence="1">Cell wall formation.</text>
</comment>
<comment type="catalytic activity">
    <reaction evidence="1">
        <text>UDP-N-acetyl-alpha-D-muramate + L-alanine + ATP = UDP-N-acetyl-alpha-D-muramoyl-L-alanine + ADP + phosphate + H(+)</text>
        <dbReference type="Rhea" id="RHEA:23372"/>
        <dbReference type="ChEBI" id="CHEBI:15378"/>
        <dbReference type="ChEBI" id="CHEBI:30616"/>
        <dbReference type="ChEBI" id="CHEBI:43474"/>
        <dbReference type="ChEBI" id="CHEBI:57972"/>
        <dbReference type="ChEBI" id="CHEBI:70757"/>
        <dbReference type="ChEBI" id="CHEBI:83898"/>
        <dbReference type="ChEBI" id="CHEBI:456216"/>
        <dbReference type="EC" id="6.3.2.8"/>
    </reaction>
</comment>
<comment type="pathway">
    <text evidence="1">Cell wall biogenesis; peptidoglycan biosynthesis.</text>
</comment>
<comment type="subcellular location">
    <subcellularLocation>
        <location evidence="1">Cytoplasm</location>
    </subcellularLocation>
</comment>
<comment type="similarity">
    <text evidence="1">Belongs to the MurCDEF family.</text>
</comment>
<evidence type="ECO:0000255" key="1">
    <source>
        <dbReference type="HAMAP-Rule" id="MF_00046"/>
    </source>
</evidence>
<gene>
    <name evidence="1" type="primary">murC</name>
    <name type="ordered locus">FN1456</name>
</gene>